<reference key="1">
    <citation type="journal article" date="2000" name="DNA Res.">
        <title>Complete genome structure of the nitrogen-fixing symbiotic bacterium Mesorhizobium loti.</title>
        <authorList>
            <person name="Kaneko T."/>
            <person name="Nakamura Y."/>
            <person name="Sato S."/>
            <person name="Asamizu E."/>
            <person name="Kato T."/>
            <person name="Sasamoto S."/>
            <person name="Watanabe A."/>
            <person name="Idesawa K."/>
            <person name="Ishikawa A."/>
            <person name="Kawashima K."/>
            <person name="Kimura T."/>
            <person name="Kishida Y."/>
            <person name="Kiyokawa C."/>
            <person name="Kohara M."/>
            <person name="Matsumoto M."/>
            <person name="Matsuno A."/>
            <person name="Mochizuki Y."/>
            <person name="Nakayama S."/>
            <person name="Nakazaki N."/>
            <person name="Shimpo S."/>
            <person name="Sugimoto M."/>
            <person name="Takeuchi C."/>
            <person name="Yamada M."/>
            <person name="Tabata S."/>
        </authorList>
    </citation>
    <scope>NUCLEOTIDE SEQUENCE [LARGE SCALE GENOMIC DNA]</scope>
    <source>
        <strain>LMG 29417 / CECT 9101 / MAFF 303099</strain>
    </source>
</reference>
<comment type="function">
    <text evidence="1">Cell division inhibitor that blocks the formation of polar Z ring septums. Rapidly oscillates between the poles of the cell to destabilize FtsZ filaments that have formed before they mature into polar Z rings. Prevents FtsZ polymerization.</text>
</comment>
<comment type="subunit">
    <text evidence="1">Interacts with MinD and FtsZ.</text>
</comment>
<comment type="similarity">
    <text evidence="1">Belongs to the MinC family.</text>
</comment>
<comment type="sequence caution" evidence="3">
    <conflict type="erroneous initiation">
        <sequence resource="EMBL-CDS" id="BAB49198"/>
    </conflict>
</comment>
<name>MINC_RHILO</name>
<sequence>MTFAAPLEAKSIRFRARSFVAFTLTPEAPMVEWLQGLDHWIGNSPGYFAGRPVLLDLNVLKPAPSEIAALVAELGTRGIRIYAIELEGASLGPDLPPLLVGAKEATTEGLLPGRKGGQEGSGKPDGKAAEGRAPDHGTEGRADAGAAGKGKAGASKTDESGPQVSHYDSGTLMIKTPIRSGQAIMHAHGDVIVLGSVASGSEIVAAGSIHVYGTLRGRASAGALGNTAARIFCRRNEAELLSVDGWYITAEEMEGVSRGKPVQAFLDGDGLRVETLS</sequence>
<protein>
    <recommendedName>
        <fullName evidence="1">Probable septum site-determining protein MinC</fullName>
    </recommendedName>
</protein>
<feature type="chain" id="PRO_0000189058" description="Probable septum site-determining protein MinC">
    <location>
        <begin position="1"/>
        <end position="277"/>
    </location>
</feature>
<feature type="region of interest" description="Disordered" evidence="2">
    <location>
        <begin position="107"/>
        <end position="168"/>
    </location>
</feature>
<feature type="compositionally biased region" description="Basic and acidic residues" evidence="2">
    <location>
        <begin position="122"/>
        <end position="142"/>
    </location>
</feature>
<proteinExistence type="inferred from homology"/>
<evidence type="ECO:0000255" key="1">
    <source>
        <dbReference type="HAMAP-Rule" id="MF_00267"/>
    </source>
</evidence>
<evidence type="ECO:0000256" key="2">
    <source>
        <dbReference type="SAM" id="MobiDB-lite"/>
    </source>
</evidence>
<evidence type="ECO:0000305" key="3"/>
<accession>Q98JG8</accession>
<gene>
    <name evidence="1" type="primary">minC</name>
    <name type="ordered locus">mll1951</name>
</gene>
<dbReference type="EMBL" id="BA000012">
    <property type="protein sequence ID" value="BAB49198.1"/>
    <property type="status" value="ALT_INIT"/>
    <property type="molecule type" value="Genomic_DNA"/>
</dbReference>
<dbReference type="RefSeq" id="WP_032931017.1">
    <property type="nucleotide sequence ID" value="NC_002678.2"/>
</dbReference>
<dbReference type="SMR" id="Q98JG8"/>
<dbReference type="GeneID" id="66683040"/>
<dbReference type="KEGG" id="mlo:mll1951"/>
<dbReference type="eggNOG" id="COG0850">
    <property type="taxonomic scope" value="Bacteria"/>
</dbReference>
<dbReference type="HOGENOM" id="CLU_067812_1_0_5"/>
<dbReference type="Proteomes" id="UP000000552">
    <property type="component" value="Chromosome"/>
</dbReference>
<dbReference type="GO" id="GO:0000902">
    <property type="term" value="P:cell morphogenesis"/>
    <property type="evidence" value="ECO:0007669"/>
    <property type="project" value="InterPro"/>
</dbReference>
<dbReference type="GO" id="GO:0000917">
    <property type="term" value="P:division septum assembly"/>
    <property type="evidence" value="ECO:0007669"/>
    <property type="project" value="UniProtKB-KW"/>
</dbReference>
<dbReference type="GO" id="GO:1901891">
    <property type="term" value="P:regulation of cell septum assembly"/>
    <property type="evidence" value="ECO:0007669"/>
    <property type="project" value="InterPro"/>
</dbReference>
<dbReference type="Gene3D" id="2.160.20.70">
    <property type="match status" value="1"/>
</dbReference>
<dbReference type="Gene3D" id="3.30.70.260">
    <property type="match status" value="1"/>
</dbReference>
<dbReference type="HAMAP" id="MF_00267">
    <property type="entry name" value="MinC"/>
    <property type="match status" value="1"/>
</dbReference>
<dbReference type="InterPro" id="IPR016098">
    <property type="entry name" value="CAP/MinC_C"/>
</dbReference>
<dbReference type="InterPro" id="IPR013033">
    <property type="entry name" value="MinC"/>
</dbReference>
<dbReference type="InterPro" id="IPR036145">
    <property type="entry name" value="MinC_C_sf"/>
</dbReference>
<dbReference type="InterPro" id="IPR005526">
    <property type="entry name" value="Septum_form_inhib_MinC_C"/>
</dbReference>
<dbReference type="NCBIfam" id="TIGR01222">
    <property type="entry name" value="minC"/>
    <property type="match status" value="1"/>
</dbReference>
<dbReference type="PANTHER" id="PTHR34108">
    <property type="entry name" value="SEPTUM SITE-DETERMINING PROTEIN MINC"/>
    <property type="match status" value="1"/>
</dbReference>
<dbReference type="PANTHER" id="PTHR34108:SF1">
    <property type="entry name" value="SEPTUM SITE-DETERMINING PROTEIN MINC"/>
    <property type="match status" value="1"/>
</dbReference>
<dbReference type="Pfam" id="PF03775">
    <property type="entry name" value="MinC_C"/>
    <property type="match status" value="1"/>
</dbReference>
<dbReference type="SUPFAM" id="SSF63848">
    <property type="entry name" value="Cell-division inhibitor MinC, C-terminal domain"/>
    <property type="match status" value="1"/>
</dbReference>
<organism>
    <name type="scientific">Mesorhizobium japonicum (strain LMG 29417 / CECT 9101 / MAFF 303099)</name>
    <name type="common">Mesorhizobium loti (strain MAFF 303099)</name>
    <dbReference type="NCBI Taxonomy" id="266835"/>
    <lineage>
        <taxon>Bacteria</taxon>
        <taxon>Pseudomonadati</taxon>
        <taxon>Pseudomonadota</taxon>
        <taxon>Alphaproteobacteria</taxon>
        <taxon>Hyphomicrobiales</taxon>
        <taxon>Phyllobacteriaceae</taxon>
        <taxon>Mesorhizobium</taxon>
    </lineage>
</organism>
<keyword id="KW-0131">Cell cycle</keyword>
<keyword id="KW-0132">Cell division</keyword>
<keyword id="KW-0717">Septation</keyword>